<proteinExistence type="inferred from homology"/>
<gene>
    <name evidence="1" type="primary">kdsA</name>
    <name type="ordered locus">MS1189</name>
</gene>
<name>KDSA_MANSM</name>
<accession>Q65TB4</accession>
<keyword id="KW-0963">Cytoplasm</keyword>
<keyword id="KW-0448">Lipopolysaccharide biosynthesis</keyword>
<keyword id="KW-0808">Transferase</keyword>
<comment type="catalytic activity">
    <reaction evidence="1">
        <text>D-arabinose 5-phosphate + phosphoenolpyruvate + H2O = 3-deoxy-alpha-D-manno-2-octulosonate-8-phosphate + phosphate</text>
        <dbReference type="Rhea" id="RHEA:14053"/>
        <dbReference type="ChEBI" id="CHEBI:15377"/>
        <dbReference type="ChEBI" id="CHEBI:43474"/>
        <dbReference type="ChEBI" id="CHEBI:57693"/>
        <dbReference type="ChEBI" id="CHEBI:58702"/>
        <dbReference type="ChEBI" id="CHEBI:85985"/>
        <dbReference type="EC" id="2.5.1.55"/>
    </reaction>
</comment>
<comment type="pathway">
    <text evidence="1">Carbohydrate biosynthesis; 3-deoxy-D-manno-octulosonate biosynthesis; 3-deoxy-D-manno-octulosonate from D-ribulose 5-phosphate: step 2/3.</text>
</comment>
<comment type="pathway">
    <text evidence="1">Bacterial outer membrane biogenesis; lipopolysaccharide biosynthesis.</text>
</comment>
<comment type="subcellular location">
    <subcellularLocation>
        <location evidence="1">Cytoplasm</location>
    </subcellularLocation>
</comment>
<comment type="similarity">
    <text evidence="1">Belongs to the KdsA family.</text>
</comment>
<sequence length="284" mass="30928">MQNKIVRIGDINVANDNPFVLFGGMNVLESRDMAMQVCEKYVEVTNKLGVPYVFKASFDKANRSSIHSYRGPGMEEGLKIFQELKQTFGVKIITDVHEIYQCKPVAEVADVIQLPAFLARQTDLVEAMARTGAVINVKKPQFLSPGQMGNIVEKIEECGNDKVILCDRGSNFGYDNLVVDMLGFGVMKKVSKGAPVIFDVTHSLQCRDPFGAASGGRRDQVTELARAGLAVGIAGLFLEAHPDPNNAKCDGPSALPLSVLEGFVSQMKALDDLVKSFPQLDTSK</sequence>
<organism>
    <name type="scientific">Mannheimia succiniciproducens (strain KCTC 0769BP / MBEL55E)</name>
    <dbReference type="NCBI Taxonomy" id="221988"/>
    <lineage>
        <taxon>Bacteria</taxon>
        <taxon>Pseudomonadati</taxon>
        <taxon>Pseudomonadota</taxon>
        <taxon>Gammaproteobacteria</taxon>
        <taxon>Pasteurellales</taxon>
        <taxon>Pasteurellaceae</taxon>
        <taxon>Basfia</taxon>
    </lineage>
</organism>
<protein>
    <recommendedName>
        <fullName evidence="1">2-dehydro-3-deoxyphosphooctonate aldolase</fullName>
        <ecNumber evidence="1">2.5.1.55</ecNumber>
    </recommendedName>
    <alternativeName>
        <fullName evidence="1">3-deoxy-D-manno-octulosonic acid 8-phosphate synthase</fullName>
    </alternativeName>
    <alternativeName>
        <fullName evidence="1">KDO-8-phosphate synthase</fullName>
        <shortName evidence="1">KDO 8-P synthase</shortName>
        <shortName evidence="1">KDOPS</shortName>
    </alternativeName>
    <alternativeName>
        <fullName evidence="1">Phospho-2-dehydro-3-deoxyoctonate aldolase</fullName>
    </alternativeName>
</protein>
<feature type="chain" id="PRO_0000187140" description="2-dehydro-3-deoxyphosphooctonate aldolase">
    <location>
        <begin position="1"/>
        <end position="284"/>
    </location>
</feature>
<dbReference type="EC" id="2.5.1.55" evidence="1"/>
<dbReference type="EMBL" id="AE016827">
    <property type="protein sequence ID" value="AAU37796.1"/>
    <property type="molecule type" value="Genomic_DNA"/>
</dbReference>
<dbReference type="RefSeq" id="WP_011200363.1">
    <property type="nucleotide sequence ID" value="NC_006300.1"/>
</dbReference>
<dbReference type="SMR" id="Q65TB4"/>
<dbReference type="STRING" id="221988.MS1189"/>
<dbReference type="KEGG" id="msu:MS1189"/>
<dbReference type="eggNOG" id="COG2877">
    <property type="taxonomic scope" value="Bacteria"/>
</dbReference>
<dbReference type="HOGENOM" id="CLU_036666_0_0_6"/>
<dbReference type="OrthoDB" id="9776934at2"/>
<dbReference type="UniPathway" id="UPA00030"/>
<dbReference type="UniPathway" id="UPA00357">
    <property type="reaction ID" value="UER00474"/>
</dbReference>
<dbReference type="Proteomes" id="UP000000607">
    <property type="component" value="Chromosome"/>
</dbReference>
<dbReference type="GO" id="GO:0005737">
    <property type="term" value="C:cytoplasm"/>
    <property type="evidence" value="ECO:0007669"/>
    <property type="project" value="UniProtKB-SubCell"/>
</dbReference>
<dbReference type="GO" id="GO:0008676">
    <property type="term" value="F:3-deoxy-8-phosphooctulonate synthase activity"/>
    <property type="evidence" value="ECO:0007669"/>
    <property type="project" value="UniProtKB-UniRule"/>
</dbReference>
<dbReference type="GO" id="GO:0019294">
    <property type="term" value="P:keto-3-deoxy-D-manno-octulosonic acid biosynthetic process"/>
    <property type="evidence" value="ECO:0007669"/>
    <property type="project" value="UniProtKB-UniRule"/>
</dbReference>
<dbReference type="FunFam" id="3.20.20.70:FF:000058">
    <property type="entry name" value="2-dehydro-3-deoxyphosphooctonate aldolase"/>
    <property type="match status" value="1"/>
</dbReference>
<dbReference type="Gene3D" id="3.20.20.70">
    <property type="entry name" value="Aldolase class I"/>
    <property type="match status" value="1"/>
</dbReference>
<dbReference type="HAMAP" id="MF_00056">
    <property type="entry name" value="KDO8P_synth"/>
    <property type="match status" value="1"/>
</dbReference>
<dbReference type="InterPro" id="IPR013785">
    <property type="entry name" value="Aldolase_TIM"/>
</dbReference>
<dbReference type="InterPro" id="IPR006218">
    <property type="entry name" value="DAHP1/KDSA"/>
</dbReference>
<dbReference type="InterPro" id="IPR006269">
    <property type="entry name" value="KDO8P_synthase"/>
</dbReference>
<dbReference type="NCBIfam" id="TIGR01362">
    <property type="entry name" value="KDO8P_synth"/>
    <property type="match status" value="1"/>
</dbReference>
<dbReference type="NCBIfam" id="NF003543">
    <property type="entry name" value="PRK05198.1"/>
    <property type="match status" value="1"/>
</dbReference>
<dbReference type="NCBIfam" id="NF009109">
    <property type="entry name" value="PRK12457.1"/>
    <property type="match status" value="1"/>
</dbReference>
<dbReference type="PANTHER" id="PTHR21057">
    <property type="entry name" value="PHOSPHO-2-DEHYDRO-3-DEOXYHEPTONATE ALDOLASE"/>
    <property type="match status" value="1"/>
</dbReference>
<dbReference type="Pfam" id="PF00793">
    <property type="entry name" value="DAHP_synth_1"/>
    <property type="match status" value="1"/>
</dbReference>
<dbReference type="SUPFAM" id="SSF51569">
    <property type="entry name" value="Aldolase"/>
    <property type="match status" value="1"/>
</dbReference>
<evidence type="ECO:0000255" key="1">
    <source>
        <dbReference type="HAMAP-Rule" id="MF_00056"/>
    </source>
</evidence>
<reference key="1">
    <citation type="journal article" date="2004" name="Nat. Biotechnol.">
        <title>The genome sequence of the capnophilic rumen bacterium Mannheimia succiniciproducens.</title>
        <authorList>
            <person name="Hong S.H."/>
            <person name="Kim J.S."/>
            <person name="Lee S.Y."/>
            <person name="In Y.H."/>
            <person name="Choi S.S."/>
            <person name="Rih J.-K."/>
            <person name="Kim C.H."/>
            <person name="Jeong H."/>
            <person name="Hur C.G."/>
            <person name="Kim J.J."/>
        </authorList>
    </citation>
    <scope>NUCLEOTIDE SEQUENCE [LARGE SCALE GENOMIC DNA]</scope>
    <source>
        <strain>KCTC 0769BP / MBEL55E</strain>
    </source>
</reference>